<gene>
    <name evidence="1" type="primary">rplE</name>
    <name type="ordered locus">Mmwyl1_4264</name>
</gene>
<name>RL5_MARMS</name>
<protein>
    <recommendedName>
        <fullName evidence="1">Large ribosomal subunit protein uL5</fullName>
    </recommendedName>
    <alternativeName>
        <fullName evidence="2">50S ribosomal protein L5</fullName>
    </alternativeName>
</protein>
<comment type="function">
    <text evidence="1">This is one of the proteins that bind and probably mediate the attachment of the 5S RNA into the large ribosomal subunit, where it forms part of the central protuberance. In the 70S ribosome it contacts protein S13 of the 30S subunit (bridge B1b), connecting the 2 subunits; this bridge is implicated in subunit movement. Contacts the P site tRNA; the 5S rRNA and some of its associated proteins might help stabilize positioning of ribosome-bound tRNAs.</text>
</comment>
<comment type="subunit">
    <text evidence="1">Part of the 50S ribosomal subunit; part of the 5S rRNA/L5/L18/L25 subcomplex. Contacts the 5S rRNA and the P site tRNA. Forms a bridge to the 30S subunit in the 70S ribosome.</text>
</comment>
<comment type="similarity">
    <text evidence="1">Belongs to the universal ribosomal protein uL5 family.</text>
</comment>
<feature type="chain" id="PRO_1000086597" description="Large ribosomal subunit protein uL5">
    <location>
        <begin position="1"/>
        <end position="179"/>
    </location>
</feature>
<sequence>MARLKQVYKDQVVAKLTEEFSYKNVMEVPKITKITLNMGVGEAIADKKLLEHAVNDLEALSGQKVVVTKARKSVAGFKIRDGYPIGCKVTLRGERMWDFFDRLVDVAIPRIRDFRGLNPKSFDGRGNYSMGVKEQIIFPEIDYDKVDRVRGMDITITTTARTDEEGRALLAAFSFPFKK</sequence>
<reference key="1">
    <citation type="submission" date="2007-06" db="EMBL/GenBank/DDBJ databases">
        <title>Complete sequence of Marinomonas sp. MWYL1.</title>
        <authorList>
            <consortium name="US DOE Joint Genome Institute"/>
            <person name="Copeland A."/>
            <person name="Lucas S."/>
            <person name="Lapidus A."/>
            <person name="Barry K."/>
            <person name="Glavina del Rio T."/>
            <person name="Dalin E."/>
            <person name="Tice H."/>
            <person name="Pitluck S."/>
            <person name="Kiss H."/>
            <person name="Brettin T."/>
            <person name="Bruce D."/>
            <person name="Detter J.C."/>
            <person name="Han C."/>
            <person name="Schmutz J."/>
            <person name="Larimer F."/>
            <person name="Land M."/>
            <person name="Hauser L."/>
            <person name="Kyrpides N."/>
            <person name="Kim E."/>
            <person name="Johnston A.W.B."/>
            <person name="Todd J.D."/>
            <person name="Rogers R."/>
            <person name="Wexler M."/>
            <person name="Bond P.L."/>
            <person name="Li Y."/>
            <person name="Richardson P."/>
        </authorList>
    </citation>
    <scope>NUCLEOTIDE SEQUENCE [LARGE SCALE GENOMIC DNA]</scope>
    <source>
        <strain>MWYL1</strain>
    </source>
</reference>
<accession>A6W380</accession>
<evidence type="ECO:0000255" key="1">
    <source>
        <dbReference type="HAMAP-Rule" id="MF_01333"/>
    </source>
</evidence>
<evidence type="ECO:0000305" key="2"/>
<keyword id="KW-0687">Ribonucleoprotein</keyword>
<keyword id="KW-0689">Ribosomal protein</keyword>
<keyword id="KW-0694">RNA-binding</keyword>
<keyword id="KW-0699">rRNA-binding</keyword>
<keyword id="KW-0820">tRNA-binding</keyword>
<dbReference type="EMBL" id="CP000749">
    <property type="protein sequence ID" value="ABR73159.1"/>
    <property type="molecule type" value="Genomic_DNA"/>
</dbReference>
<dbReference type="SMR" id="A6W380"/>
<dbReference type="STRING" id="400668.Mmwyl1_4264"/>
<dbReference type="KEGG" id="mmw:Mmwyl1_4264"/>
<dbReference type="eggNOG" id="COG0094">
    <property type="taxonomic scope" value="Bacteria"/>
</dbReference>
<dbReference type="HOGENOM" id="CLU_061015_2_1_6"/>
<dbReference type="OrthoDB" id="9806626at2"/>
<dbReference type="GO" id="GO:1990904">
    <property type="term" value="C:ribonucleoprotein complex"/>
    <property type="evidence" value="ECO:0007669"/>
    <property type="project" value="UniProtKB-KW"/>
</dbReference>
<dbReference type="GO" id="GO:0005840">
    <property type="term" value="C:ribosome"/>
    <property type="evidence" value="ECO:0007669"/>
    <property type="project" value="UniProtKB-KW"/>
</dbReference>
<dbReference type="GO" id="GO:0019843">
    <property type="term" value="F:rRNA binding"/>
    <property type="evidence" value="ECO:0007669"/>
    <property type="project" value="UniProtKB-UniRule"/>
</dbReference>
<dbReference type="GO" id="GO:0003735">
    <property type="term" value="F:structural constituent of ribosome"/>
    <property type="evidence" value="ECO:0007669"/>
    <property type="project" value="InterPro"/>
</dbReference>
<dbReference type="GO" id="GO:0000049">
    <property type="term" value="F:tRNA binding"/>
    <property type="evidence" value="ECO:0007669"/>
    <property type="project" value="UniProtKB-UniRule"/>
</dbReference>
<dbReference type="GO" id="GO:0006412">
    <property type="term" value="P:translation"/>
    <property type="evidence" value="ECO:0007669"/>
    <property type="project" value="UniProtKB-UniRule"/>
</dbReference>
<dbReference type="FunFam" id="3.30.1440.10:FF:000001">
    <property type="entry name" value="50S ribosomal protein L5"/>
    <property type="match status" value="1"/>
</dbReference>
<dbReference type="Gene3D" id="3.30.1440.10">
    <property type="match status" value="1"/>
</dbReference>
<dbReference type="HAMAP" id="MF_01333_B">
    <property type="entry name" value="Ribosomal_uL5_B"/>
    <property type="match status" value="1"/>
</dbReference>
<dbReference type="InterPro" id="IPR002132">
    <property type="entry name" value="Ribosomal_uL5"/>
</dbReference>
<dbReference type="InterPro" id="IPR020930">
    <property type="entry name" value="Ribosomal_uL5_bac-type"/>
</dbReference>
<dbReference type="InterPro" id="IPR031309">
    <property type="entry name" value="Ribosomal_uL5_C"/>
</dbReference>
<dbReference type="InterPro" id="IPR020929">
    <property type="entry name" value="Ribosomal_uL5_CS"/>
</dbReference>
<dbReference type="InterPro" id="IPR022803">
    <property type="entry name" value="Ribosomal_uL5_dom_sf"/>
</dbReference>
<dbReference type="InterPro" id="IPR031310">
    <property type="entry name" value="Ribosomal_uL5_N"/>
</dbReference>
<dbReference type="NCBIfam" id="NF000585">
    <property type="entry name" value="PRK00010.1"/>
    <property type="match status" value="1"/>
</dbReference>
<dbReference type="PANTHER" id="PTHR11994">
    <property type="entry name" value="60S RIBOSOMAL PROTEIN L11-RELATED"/>
    <property type="match status" value="1"/>
</dbReference>
<dbReference type="Pfam" id="PF00281">
    <property type="entry name" value="Ribosomal_L5"/>
    <property type="match status" value="1"/>
</dbReference>
<dbReference type="Pfam" id="PF00673">
    <property type="entry name" value="Ribosomal_L5_C"/>
    <property type="match status" value="1"/>
</dbReference>
<dbReference type="PIRSF" id="PIRSF002161">
    <property type="entry name" value="Ribosomal_L5"/>
    <property type="match status" value="1"/>
</dbReference>
<dbReference type="SUPFAM" id="SSF55282">
    <property type="entry name" value="RL5-like"/>
    <property type="match status" value="1"/>
</dbReference>
<dbReference type="PROSITE" id="PS00358">
    <property type="entry name" value="RIBOSOMAL_L5"/>
    <property type="match status" value="1"/>
</dbReference>
<organism>
    <name type="scientific">Marinomonas sp. (strain MWYL1)</name>
    <dbReference type="NCBI Taxonomy" id="400668"/>
    <lineage>
        <taxon>Bacteria</taxon>
        <taxon>Pseudomonadati</taxon>
        <taxon>Pseudomonadota</taxon>
        <taxon>Gammaproteobacteria</taxon>
        <taxon>Oceanospirillales</taxon>
        <taxon>Oceanospirillaceae</taxon>
        <taxon>Marinomonas</taxon>
    </lineage>
</organism>
<proteinExistence type="inferred from homology"/>